<comment type="function">
    <text evidence="1">Specifically dimethylates two adjacent adenosines (A1518 and A1519) in the loop of a conserved hairpin near the 3'-end of 16S rRNA in the 30S particle. May play a critical role in biogenesis of 30S subunits.</text>
</comment>
<comment type="catalytic activity">
    <reaction evidence="1">
        <text>adenosine(1518)/adenosine(1519) in 16S rRNA + 4 S-adenosyl-L-methionine = N(6)-dimethyladenosine(1518)/N(6)-dimethyladenosine(1519) in 16S rRNA + 4 S-adenosyl-L-homocysteine + 4 H(+)</text>
        <dbReference type="Rhea" id="RHEA:19609"/>
        <dbReference type="Rhea" id="RHEA-COMP:10232"/>
        <dbReference type="Rhea" id="RHEA-COMP:10233"/>
        <dbReference type="ChEBI" id="CHEBI:15378"/>
        <dbReference type="ChEBI" id="CHEBI:57856"/>
        <dbReference type="ChEBI" id="CHEBI:59789"/>
        <dbReference type="ChEBI" id="CHEBI:74411"/>
        <dbReference type="ChEBI" id="CHEBI:74493"/>
        <dbReference type="EC" id="2.1.1.182"/>
    </reaction>
</comment>
<comment type="subcellular location">
    <subcellularLocation>
        <location evidence="1">Cytoplasm</location>
    </subcellularLocation>
</comment>
<comment type="similarity">
    <text evidence="1">Belongs to the class I-like SAM-binding methyltransferase superfamily. rRNA adenine N(6)-methyltransferase family. RsmA subfamily.</text>
</comment>
<keyword id="KW-0963">Cytoplasm</keyword>
<keyword id="KW-0489">Methyltransferase</keyword>
<keyword id="KW-0694">RNA-binding</keyword>
<keyword id="KW-0698">rRNA processing</keyword>
<keyword id="KW-0949">S-adenosyl-L-methionine</keyword>
<keyword id="KW-0808">Transferase</keyword>
<proteinExistence type="inferred from homology"/>
<name>RSMA_ANOFW</name>
<reference key="1">
    <citation type="journal article" date="2008" name="Genome Biol.">
        <title>Encapsulated in silica: genome, proteome and physiology of the thermophilic bacterium Anoxybacillus flavithermus WK1.</title>
        <authorList>
            <person name="Saw J.H."/>
            <person name="Mountain B.W."/>
            <person name="Feng L."/>
            <person name="Omelchenko M.V."/>
            <person name="Hou S."/>
            <person name="Saito J.A."/>
            <person name="Stott M.B."/>
            <person name="Li D."/>
            <person name="Zhao G."/>
            <person name="Wu J."/>
            <person name="Galperin M.Y."/>
            <person name="Koonin E.V."/>
            <person name="Makarova K.S."/>
            <person name="Wolf Y.I."/>
            <person name="Rigden D.J."/>
            <person name="Dunfield P.F."/>
            <person name="Wang L."/>
            <person name="Alam M."/>
        </authorList>
    </citation>
    <scope>NUCLEOTIDE SEQUENCE [LARGE SCALE GENOMIC DNA]</scope>
    <source>
        <strain>DSM 21510 / WK1</strain>
    </source>
</reference>
<feature type="chain" id="PRO_1000130240" description="Ribosomal RNA small subunit methyltransferase A">
    <location>
        <begin position="1"/>
        <end position="295"/>
    </location>
</feature>
<feature type="binding site" evidence="1">
    <location>
        <position position="29"/>
    </location>
    <ligand>
        <name>S-adenosyl-L-methionine</name>
        <dbReference type="ChEBI" id="CHEBI:59789"/>
    </ligand>
</feature>
<feature type="binding site" evidence="1">
    <location>
        <position position="31"/>
    </location>
    <ligand>
        <name>S-adenosyl-L-methionine</name>
        <dbReference type="ChEBI" id="CHEBI:59789"/>
    </ligand>
</feature>
<feature type="binding site" evidence="1">
    <location>
        <position position="56"/>
    </location>
    <ligand>
        <name>S-adenosyl-L-methionine</name>
        <dbReference type="ChEBI" id="CHEBI:59789"/>
    </ligand>
</feature>
<feature type="binding site" evidence="1">
    <location>
        <position position="77"/>
    </location>
    <ligand>
        <name>S-adenosyl-L-methionine</name>
        <dbReference type="ChEBI" id="CHEBI:59789"/>
    </ligand>
</feature>
<feature type="binding site" evidence="1">
    <location>
        <position position="102"/>
    </location>
    <ligand>
        <name>S-adenosyl-L-methionine</name>
        <dbReference type="ChEBI" id="CHEBI:59789"/>
    </ligand>
</feature>
<feature type="binding site" evidence="1">
    <location>
        <position position="127"/>
    </location>
    <ligand>
        <name>S-adenosyl-L-methionine</name>
        <dbReference type="ChEBI" id="CHEBI:59789"/>
    </ligand>
</feature>
<protein>
    <recommendedName>
        <fullName evidence="1">Ribosomal RNA small subunit methyltransferase A</fullName>
        <ecNumber evidence="1">2.1.1.182</ecNumber>
    </recommendedName>
    <alternativeName>
        <fullName evidence="1">16S rRNA (adenine(1518)-N(6)/adenine(1519)-N(6))-dimethyltransferase</fullName>
    </alternativeName>
    <alternativeName>
        <fullName evidence="1">16S rRNA dimethyladenosine transferase</fullName>
    </alternativeName>
    <alternativeName>
        <fullName evidence="1">16S rRNA dimethylase</fullName>
    </alternativeName>
    <alternativeName>
        <fullName evidence="1">S-adenosylmethionine-6-N', N'-adenosyl(rRNA) dimethyltransferase</fullName>
    </alternativeName>
</protein>
<accession>B7GFH0</accession>
<organism>
    <name type="scientific">Anoxybacillus flavithermus (strain DSM 21510 / WK1)</name>
    <dbReference type="NCBI Taxonomy" id="491915"/>
    <lineage>
        <taxon>Bacteria</taxon>
        <taxon>Bacillati</taxon>
        <taxon>Bacillota</taxon>
        <taxon>Bacilli</taxon>
        <taxon>Bacillales</taxon>
        <taxon>Anoxybacillaceae</taxon>
        <taxon>Anoxybacillus</taxon>
    </lineage>
</organism>
<gene>
    <name evidence="1" type="primary">rsmA</name>
    <name evidence="1" type="synonym">ksgA</name>
    <name type="ordered locus">Aflv_0036</name>
</gene>
<dbReference type="EC" id="2.1.1.182" evidence="1"/>
<dbReference type="EMBL" id="CP000922">
    <property type="protein sequence ID" value="ACJ32420.1"/>
    <property type="molecule type" value="Genomic_DNA"/>
</dbReference>
<dbReference type="RefSeq" id="WP_012573801.1">
    <property type="nucleotide sequence ID" value="NC_011567.1"/>
</dbReference>
<dbReference type="SMR" id="B7GFH0"/>
<dbReference type="STRING" id="491915.Aflv_0036"/>
<dbReference type="GeneID" id="7036230"/>
<dbReference type="KEGG" id="afl:Aflv_0036"/>
<dbReference type="PATRIC" id="fig|491915.6.peg.35"/>
<dbReference type="eggNOG" id="COG0030">
    <property type="taxonomic scope" value="Bacteria"/>
</dbReference>
<dbReference type="HOGENOM" id="CLU_041220_0_0_9"/>
<dbReference type="Proteomes" id="UP000000742">
    <property type="component" value="Chromosome"/>
</dbReference>
<dbReference type="GO" id="GO:0005829">
    <property type="term" value="C:cytosol"/>
    <property type="evidence" value="ECO:0007669"/>
    <property type="project" value="TreeGrafter"/>
</dbReference>
<dbReference type="GO" id="GO:0052908">
    <property type="term" value="F:16S rRNA (adenine(1518)-N(6)/adenine(1519)-N(6))-dimethyltransferase activity"/>
    <property type="evidence" value="ECO:0007669"/>
    <property type="project" value="UniProtKB-EC"/>
</dbReference>
<dbReference type="GO" id="GO:0003723">
    <property type="term" value="F:RNA binding"/>
    <property type="evidence" value="ECO:0007669"/>
    <property type="project" value="UniProtKB-KW"/>
</dbReference>
<dbReference type="CDD" id="cd02440">
    <property type="entry name" value="AdoMet_MTases"/>
    <property type="match status" value="1"/>
</dbReference>
<dbReference type="FunFam" id="3.40.50.150:FF:000023">
    <property type="entry name" value="Ribosomal RNA small subunit methyltransferase A"/>
    <property type="match status" value="1"/>
</dbReference>
<dbReference type="Gene3D" id="1.10.8.100">
    <property type="entry name" value="Ribosomal RNA adenine dimethylase-like, domain 2"/>
    <property type="match status" value="1"/>
</dbReference>
<dbReference type="Gene3D" id="3.40.50.150">
    <property type="entry name" value="Vaccinia Virus protein VP39"/>
    <property type="match status" value="1"/>
</dbReference>
<dbReference type="HAMAP" id="MF_00607">
    <property type="entry name" value="16SrRNA_methyltr_A"/>
    <property type="match status" value="1"/>
</dbReference>
<dbReference type="InterPro" id="IPR001737">
    <property type="entry name" value="KsgA/Erm"/>
</dbReference>
<dbReference type="InterPro" id="IPR023165">
    <property type="entry name" value="rRNA_Ade_diMease-like_C"/>
</dbReference>
<dbReference type="InterPro" id="IPR020596">
    <property type="entry name" value="rRNA_Ade_Mease_Trfase_CS"/>
</dbReference>
<dbReference type="InterPro" id="IPR020598">
    <property type="entry name" value="rRNA_Ade_methylase_Trfase_N"/>
</dbReference>
<dbReference type="InterPro" id="IPR011530">
    <property type="entry name" value="rRNA_adenine_dimethylase"/>
</dbReference>
<dbReference type="InterPro" id="IPR029063">
    <property type="entry name" value="SAM-dependent_MTases_sf"/>
</dbReference>
<dbReference type="NCBIfam" id="TIGR00755">
    <property type="entry name" value="ksgA"/>
    <property type="match status" value="1"/>
</dbReference>
<dbReference type="PANTHER" id="PTHR11727">
    <property type="entry name" value="DIMETHYLADENOSINE TRANSFERASE"/>
    <property type="match status" value="1"/>
</dbReference>
<dbReference type="PANTHER" id="PTHR11727:SF7">
    <property type="entry name" value="DIMETHYLADENOSINE TRANSFERASE-RELATED"/>
    <property type="match status" value="1"/>
</dbReference>
<dbReference type="Pfam" id="PF00398">
    <property type="entry name" value="RrnaAD"/>
    <property type="match status" value="1"/>
</dbReference>
<dbReference type="SMART" id="SM00650">
    <property type="entry name" value="rADc"/>
    <property type="match status" value="1"/>
</dbReference>
<dbReference type="SUPFAM" id="SSF53335">
    <property type="entry name" value="S-adenosyl-L-methionine-dependent methyltransferases"/>
    <property type="match status" value="1"/>
</dbReference>
<dbReference type="PROSITE" id="PS01131">
    <property type="entry name" value="RRNA_A_DIMETH"/>
    <property type="match status" value="1"/>
</dbReference>
<dbReference type="PROSITE" id="PS51689">
    <property type="entry name" value="SAM_RNA_A_N6_MT"/>
    <property type="match status" value="1"/>
</dbReference>
<evidence type="ECO:0000255" key="1">
    <source>
        <dbReference type="HAMAP-Rule" id="MF_00607"/>
    </source>
</evidence>
<sequence>MYKDIATPTRTKEILEKYGFSFKKSLGQNFLIEPNILHRIVDFAQLSERTGVIEIGPGIGALTEQLARRAKKVVAFEIDQRLLPILADTLSPYTNVSIIHEDILKADVQQVIAEQFTDVDDIMVVANLPYYVTTPIIMKLLTDRLPIRGMVVMLQKEVADRMAAKPGTKDYGSLTIAVQYYTHAETVMHVPRTVFVPKPNVDSAVIRLLKREQPAVSVSNEDFFFAVVRASFGQRRKTILNNLLNQLPNGKEKKEQIENALANAGIDPKRRGETLAIAEFATLSEQLYPIFYEEA</sequence>